<reference key="1">
    <citation type="journal article" date="2006" name="Genome Res.">
        <title>Skewed genomic variability in strains of the toxigenic bacterial pathogen, Clostridium perfringens.</title>
        <authorList>
            <person name="Myers G.S.A."/>
            <person name="Rasko D.A."/>
            <person name="Cheung J.K."/>
            <person name="Ravel J."/>
            <person name="Seshadri R."/>
            <person name="DeBoy R.T."/>
            <person name="Ren Q."/>
            <person name="Varga J."/>
            <person name="Awad M.M."/>
            <person name="Brinkac L.M."/>
            <person name="Daugherty S.C."/>
            <person name="Haft D.H."/>
            <person name="Dodson R.J."/>
            <person name="Madupu R."/>
            <person name="Nelson W.C."/>
            <person name="Rosovitz M.J."/>
            <person name="Sullivan S.A."/>
            <person name="Khouri H."/>
            <person name="Dimitrov G.I."/>
            <person name="Watkins K.L."/>
            <person name="Mulligan S."/>
            <person name="Benton J."/>
            <person name="Radune D."/>
            <person name="Fisher D.J."/>
            <person name="Atkins H.S."/>
            <person name="Hiscox T."/>
            <person name="Jost B.H."/>
            <person name="Billington S.J."/>
            <person name="Songer J.G."/>
            <person name="McClane B.A."/>
            <person name="Titball R.W."/>
            <person name="Rood J.I."/>
            <person name="Melville S.B."/>
            <person name="Paulsen I.T."/>
        </authorList>
    </citation>
    <scope>NUCLEOTIDE SEQUENCE [LARGE SCALE GENOMIC DNA]</scope>
    <source>
        <strain>SM101 / Type A</strain>
    </source>
</reference>
<feature type="chain" id="PRO_1000022013" description="Probable RNA 2'-phosphotransferase">
    <location>
        <begin position="1"/>
        <end position="186"/>
    </location>
</feature>
<protein>
    <recommendedName>
        <fullName evidence="1">Probable RNA 2'-phosphotransferase</fullName>
        <ecNumber evidence="1">2.7.1.-</ecNumber>
    </recommendedName>
</protein>
<name>KPTA_CLOPS</name>
<evidence type="ECO:0000255" key="1">
    <source>
        <dbReference type="HAMAP-Rule" id="MF_00299"/>
    </source>
</evidence>
<organism>
    <name type="scientific">Clostridium perfringens (strain SM101 / Type A)</name>
    <dbReference type="NCBI Taxonomy" id="289380"/>
    <lineage>
        <taxon>Bacteria</taxon>
        <taxon>Bacillati</taxon>
        <taxon>Bacillota</taxon>
        <taxon>Clostridia</taxon>
        <taxon>Eubacteriales</taxon>
        <taxon>Clostridiaceae</taxon>
        <taxon>Clostridium</taxon>
    </lineage>
</organism>
<comment type="function">
    <text evidence="1">Removes the 2'-phosphate from RNA via an intermediate in which the phosphate is ADP-ribosylated by NAD followed by a presumed transesterification to release the RNA and generate ADP-ribose 1''-2''-cyclic phosphate (APPR&gt;P). May function as an ADP-ribosylase.</text>
</comment>
<comment type="similarity">
    <text evidence="1">Belongs to the KptA/TPT1 family.</text>
</comment>
<accession>Q0SWM0</accession>
<proteinExistence type="inferred from homology"/>
<keyword id="KW-0520">NAD</keyword>
<keyword id="KW-0808">Transferase</keyword>
<sequence length="186" mass="21633">MKNNDSKISKYISLILRHKPEEIGLKLDEHGYLVVLDLIEGINKSYEGFSMDDLERIVREDSKGRYSFNEDKSKIRANQGHSIKVDLGLEEIKPPKVLYHGTGRKYLESILKNGLIKKERQYIHLSKDRETASIVGKRHGDLVILEVDSESMFNDGIKFYLSKNNVWLCNYVPKKYIKELNLEEVF</sequence>
<dbReference type="EC" id="2.7.1.-" evidence="1"/>
<dbReference type="EMBL" id="CP000312">
    <property type="protein sequence ID" value="ABG86196.1"/>
    <property type="molecule type" value="Genomic_DNA"/>
</dbReference>
<dbReference type="RefSeq" id="WP_011591299.1">
    <property type="nucleotide sequence ID" value="NC_008262.1"/>
</dbReference>
<dbReference type="SMR" id="Q0SWM0"/>
<dbReference type="KEGG" id="cpr:CPR_0143"/>
<dbReference type="Proteomes" id="UP000001824">
    <property type="component" value="Chromosome"/>
</dbReference>
<dbReference type="GO" id="GO:0003950">
    <property type="term" value="F:NAD+ poly-ADP-ribosyltransferase activity"/>
    <property type="evidence" value="ECO:0007669"/>
    <property type="project" value="InterPro"/>
</dbReference>
<dbReference type="GO" id="GO:0000215">
    <property type="term" value="F:tRNA 2'-phosphotransferase activity"/>
    <property type="evidence" value="ECO:0007669"/>
    <property type="project" value="TreeGrafter"/>
</dbReference>
<dbReference type="GO" id="GO:0006388">
    <property type="term" value="P:tRNA splicing, via endonucleolytic cleavage and ligation"/>
    <property type="evidence" value="ECO:0007669"/>
    <property type="project" value="UniProtKB-UniRule"/>
</dbReference>
<dbReference type="Gene3D" id="3.20.170.30">
    <property type="match status" value="1"/>
</dbReference>
<dbReference type="Gene3D" id="1.10.10.970">
    <property type="entry name" value="RNA 2'-phosphotransferase, Tpt1/KptA family, N-terminal domain"/>
    <property type="match status" value="1"/>
</dbReference>
<dbReference type="HAMAP" id="MF_00299">
    <property type="entry name" value="KptA"/>
    <property type="match status" value="1"/>
</dbReference>
<dbReference type="InterPro" id="IPR002745">
    <property type="entry name" value="Ptrans_KptA/Tpt1"/>
</dbReference>
<dbReference type="InterPro" id="IPR042081">
    <property type="entry name" value="RNA_2'-PTrans_C"/>
</dbReference>
<dbReference type="InterPro" id="IPR022928">
    <property type="entry name" value="RNA_2'-PTrans_KptA"/>
</dbReference>
<dbReference type="InterPro" id="IPR042080">
    <property type="entry name" value="RNA_2'-PTrans_N"/>
</dbReference>
<dbReference type="NCBIfam" id="NF002014">
    <property type="entry name" value="PRK00819.1-4"/>
    <property type="match status" value="1"/>
</dbReference>
<dbReference type="PANTHER" id="PTHR12684">
    <property type="entry name" value="PUTATIVE PHOSPHOTRANSFERASE"/>
    <property type="match status" value="1"/>
</dbReference>
<dbReference type="PANTHER" id="PTHR12684:SF2">
    <property type="entry name" value="TRNA 2'-PHOSPHOTRANSFERASE 1"/>
    <property type="match status" value="1"/>
</dbReference>
<dbReference type="Pfam" id="PF01885">
    <property type="entry name" value="PTS_2-RNA"/>
    <property type="match status" value="1"/>
</dbReference>
<dbReference type="SUPFAM" id="SSF56399">
    <property type="entry name" value="ADP-ribosylation"/>
    <property type="match status" value="1"/>
</dbReference>
<gene>
    <name evidence="1" type="primary">kptA</name>
    <name type="ordered locus">CPR_0143</name>
</gene>